<protein>
    <recommendedName>
        <fullName evidence="1">Photosystem I reaction center subunit VIII</fullName>
        <shortName evidence="1">PSI-I</shortName>
    </recommendedName>
</protein>
<dbReference type="EMBL" id="DQ887677">
    <property type="protein sequence ID" value="ABI14482.1"/>
    <property type="molecule type" value="Genomic_DNA"/>
</dbReference>
<dbReference type="RefSeq" id="YP_784483.1">
    <property type="nucleotide sequence ID" value="NC_008457.1"/>
</dbReference>
<dbReference type="SMR" id="Q06GQ0"/>
<dbReference type="GeneID" id="4363666"/>
<dbReference type="GO" id="GO:0009535">
    <property type="term" value="C:chloroplast thylakoid membrane"/>
    <property type="evidence" value="ECO:0007669"/>
    <property type="project" value="UniProtKB-SubCell"/>
</dbReference>
<dbReference type="GO" id="GO:0009522">
    <property type="term" value="C:photosystem I"/>
    <property type="evidence" value="ECO:0007669"/>
    <property type="project" value="UniProtKB-KW"/>
</dbReference>
<dbReference type="GO" id="GO:0015979">
    <property type="term" value="P:photosynthesis"/>
    <property type="evidence" value="ECO:0007669"/>
    <property type="project" value="UniProtKB-UniRule"/>
</dbReference>
<dbReference type="HAMAP" id="MF_00431">
    <property type="entry name" value="PSI_PsaI"/>
    <property type="match status" value="1"/>
</dbReference>
<dbReference type="InterPro" id="IPR001302">
    <property type="entry name" value="PSI_PsaI"/>
</dbReference>
<dbReference type="InterPro" id="IPR036357">
    <property type="entry name" value="PSI_PsaI_sf"/>
</dbReference>
<dbReference type="NCBIfam" id="TIGR03052">
    <property type="entry name" value="PS_I_psaI"/>
    <property type="match status" value="1"/>
</dbReference>
<dbReference type="PANTHER" id="PTHR35775">
    <property type="match status" value="1"/>
</dbReference>
<dbReference type="PANTHER" id="PTHR35775:SF2">
    <property type="entry name" value="PHOTOSYSTEM I REACTION CENTER SUBUNIT VIII"/>
    <property type="match status" value="1"/>
</dbReference>
<dbReference type="Pfam" id="PF00796">
    <property type="entry name" value="PSI_8"/>
    <property type="match status" value="1"/>
</dbReference>
<dbReference type="SUPFAM" id="SSF81540">
    <property type="entry name" value="Subunit VIII of photosystem I reaction centre, PsaI"/>
    <property type="match status" value="1"/>
</dbReference>
<feature type="chain" id="PRO_0000276034" description="Photosystem I reaction center subunit VIII">
    <location>
        <begin position="1"/>
        <end position="36"/>
    </location>
</feature>
<feature type="transmembrane region" description="Helical" evidence="1">
    <location>
        <begin position="4"/>
        <end position="24"/>
    </location>
</feature>
<keyword id="KW-0150">Chloroplast</keyword>
<keyword id="KW-0472">Membrane</keyword>
<keyword id="KW-0602">Photosynthesis</keyword>
<keyword id="KW-0603">Photosystem I</keyword>
<keyword id="KW-0934">Plastid</keyword>
<keyword id="KW-0793">Thylakoid</keyword>
<keyword id="KW-0812">Transmembrane</keyword>
<keyword id="KW-1133">Transmembrane helix</keyword>
<proteinExistence type="inferred from homology"/>
<name>PSAI_PIPCE</name>
<gene>
    <name evidence="1" type="primary">psaI</name>
</gene>
<geneLocation type="chloroplast"/>
<organism>
    <name type="scientific">Piper cenocladum</name>
    <name type="common">Ant piper</name>
    <dbReference type="NCBI Taxonomy" id="398741"/>
    <lineage>
        <taxon>Eukaryota</taxon>
        <taxon>Viridiplantae</taxon>
        <taxon>Streptophyta</taxon>
        <taxon>Embryophyta</taxon>
        <taxon>Tracheophyta</taxon>
        <taxon>Spermatophyta</taxon>
        <taxon>Magnoliopsida</taxon>
        <taxon>Magnoliidae</taxon>
        <taxon>Piperales</taxon>
        <taxon>Piperaceae</taxon>
        <taxon>Piper</taxon>
    </lineage>
</organism>
<comment type="function">
    <text evidence="1">May help in the organization of the PsaL subunit.</text>
</comment>
<comment type="subcellular location">
    <subcellularLocation>
        <location evidence="1">Plastid</location>
        <location evidence="1">Chloroplast thylakoid membrane</location>
        <topology evidence="1">Single-pass membrane protein</topology>
    </subcellularLocation>
</comment>
<comment type="similarity">
    <text evidence="1">Belongs to the PsaI family.</text>
</comment>
<sequence length="36" mass="3817">MTDFSLPSILVPLVGLVLPAIAMASLSLHVQKNKIV</sequence>
<reference key="1">
    <citation type="journal article" date="2006" name="BMC Evol. Biol.">
        <title>Complete plastid genome sequences of Drimys, Liriodendron, and Piper: implications for the phylogenetic relationships of magnoliids.</title>
        <authorList>
            <person name="Cai Z."/>
            <person name="Penaflor C."/>
            <person name="Kuehl J.V."/>
            <person name="Leebens-Mack J."/>
            <person name="Carlson J.E."/>
            <person name="dePamphilis C.W."/>
            <person name="Boore J.L."/>
            <person name="Jansen R.K."/>
        </authorList>
    </citation>
    <scope>NUCLEOTIDE SEQUENCE [LARGE SCALE GENOMIC DNA]</scope>
</reference>
<accession>Q06GQ0</accession>
<evidence type="ECO:0000255" key="1">
    <source>
        <dbReference type="HAMAP-Rule" id="MF_00431"/>
    </source>
</evidence>